<evidence type="ECO:0000250" key="1"/>
<evidence type="ECO:0000255" key="2"/>
<evidence type="ECO:0000255" key="3">
    <source>
        <dbReference type="PROSITE-ProRule" id="PRU00076"/>
    </source>
</evidence>
<evidence type="ECO:0000255" key="4">
    <source>
        <dbReference type="PROSITE-ProRule" id="PRU00128"/>
    </source>
</evidence>
<evidence type="ECO:0000256" key="5">
    <source>
        <dbReference type="SAM" id="MobiDB-lite"/>
    </source>
</evidence>
<evidence type="ECO:0000269" key="6">
    <source>
    </source>
</evidence>
<evidence type="ECO:0000269" key="7">
    <source>
    </source>
</evidence>
<evidence type="ECO:0000269" key="8">
    <source>
    </source>
</evidence>
<evidence type="ECO:0000269" key="9">
    <source ref="4"/>
</evidence>
<evidence type="ECO:0000303" key="10">
    <source>
    </source>
</evidence>
<evidence type="ECO:0000303" key="11">
    <source>
    </source>
</evidence>
<evidence type="ECO:0000305" key="12"/>
<reference key="1">
    <citation type="journal article" date="2003" name="Genome Res.">
        <title>The secreted protein discovery initiative (SPDI), a large-scale effort to identify novel human secreted and transmembrane proteins: a bioinformatics assessment.</title>
        <authorList>
            <person name="Clark H.F."/>
            <person name="Gurney A.L."/>
            <person name="Abaya E."/>
            <person name="Baker K."/>
            <person name="Baldwin D.T."/>
            <person name="Brush J."/>
            <person name="Chen J."/>
            <person name="Chow B."/>
            <person name="Chui C."/>
            <person name="Crowley C."/>
            <person name="Currell B."/>
            <person name="Deuel B."/>
            <person name="Dowd P."/>
            <person name="Eaton D."/>
            <person name="Foster J.S."/>
            <person name="Grimaldi C."/>
            <person name="Gu Q."/>
            <person name="Hass P.E."/>
            <person name="Heldens S."/>
            <person name="Huang A."/>
            <person name="Kim H.S."/>
            <person name="Klimowski L."/>
            <person name="Jin Y."/>
            <person name="Johnson S."/>
            <person name="Lee J."/>
            <person name="Lewis L."/>
            <person name="Liao D."/>
            <person name="Mark M.R."/>
            <person name="Robbie E."/>
            <person name="Sanchez C."/>
            <person name="Schoenfeld J."/>
            <person name="Seshagiri S."/>
            <person name="Simmons L."/>
            <person name="Singh J."/>
            <person name="Smith V."/>
            <person name="Stinson J."/>
            <person name="Vagts A."/>
            <person name="Vandlen R.L."/>
            <person name="Watanabe C."/>
            <person name="Wieand D."/>
            <person name="Woods K."/>
            <person name="Xie M.-H."/>
            <person name="Yansura D.G."/>
            <person name="Yi S."/>
            <person name="Yu G."/>
            <person name="Yuan J."/>
            <person name="Zhang M."/>
            <person name="Zhang Z."/>
            <person name="Goddard A.D."/>
            <person name="Wood W.I."/>
            <person name="Godowski P.J."/>
            <person name="Gray A.M."/>
        </authorList>
    </citation>
    <scope>NUCLEOTIDE SEQUENCE [LARGE SCALE MRNA] (ISOFORM 2)</scope>
    <scope>VARIANTS HIS-159 AND VAL-234</scope>
</reference>
<reference key="2">
    <citation type="journal article" date="2004" name="Nat. Genet.">
        <title>Complete sequencing and characterization of 21,243 full-length human cDNAs.</title>
        <authorList>
            <person name="Ota T."/>
            <person name="Suzuki Y."/>
            <person name="Nishikawa T."/>
            <person name="Otsuki T."/>
            <person name="Sugiyama T."/>
            <person name="Irie R."/>
            <person name="Wakamatsu A."/>
            <person name="Hayashi K."/>
            <person name="Sato H."/>
            <person name="Nagai K."/>
            <person name="Kimura K."/>
            <person name="Makita H."/>
            <person name="Sekine M."/>
            <person name="Obayashi M."/>
            <person name="Nishi T."/>
            <person name="Shibahara T."/>
            <person name="Tanaka T."/>
            <person name="Ishii S."/>
            <person name="Yamamoto J."/>
            <person name="Saito K."/>
            <person name="Kawai Y."/>
            <person name="Isono Y."/>
            <person name="Nakamura Y."/>
            <person name="Nagahari K."/>
            <person name="Murakami K."/>
            <person name="Yasuda T."/>
            <person name="Iwayanagi T."/>
            <person name="Wagatsuma M."/>
            <person name="Shiratori A."/>
            <person name="Sudo H."/>
            <person name="Hosoiri T."/>
            <person name="Kaku Y."/>
            <person name="Kodaira H."/>
            <person name="Kondo H."/>
            <person name="Sugawara M."/>
            <person name="Takahashi M."/>
            <person name="Kanda K."/>
            <person name="Yokoi T."/>
            <person name="Furuya T."/>
            <person name="Kikkawa E."/>
            <person name="Omura Y."/>
            <person name="Abe K."/>
            <person name="Kamihara K."/>
            <person name="Katsuta N."/>
            <person name="Sato K."/>
            <person name="Tanikawa M."/>
            <person name="Yamazaki M."/>
            <person name="Ninomiya K."/>
            <person name="Ishibashi T."/>
            <person name="Yamashita H."/>
            <person name="Murakawa K."/>
            <person name="Fujimori K."/>
            <person name="Tanai H."/>
            <person name="Kimata M."/>
            <person name="Watanabe M."/>
            <person name="Hiraoka S."/>
            <person name="Chiba Y."/>
            <person name="Ishida S."/>
            <person name="Ono Y."/>
            <person name="Takiguchi S."/>
            <person name="Watanabe S."/>
            <person name="Yosida M."/>
            <person name="Hotuta T."/>
            <person name="Kusano J."/>
            <person name="Kanehori K."/>
            <person name="Takahashi-Fujii A."/>
            <person name="Hara H."/>
            <person name="Tanase T.-O."/>
            <person name="Nomura Y."/>
            <person name="Togiya S."/>
            <person name="Komai F."/>
            <person name="Hara R."/>
            <person name="Takeuchi K."/>
            <person name="Arita M."/>
            <person name="Imose N."/>
            <person name="Musashino K."/>
            <person name="Yuuki H."/>
            <person name="Oshima A."/>
            <person name="Sasaki N."/>
            <person name="Aotsuka S."/>
            <person name="Yoshikawa Y."/>
            <person name="Matsunawa H."/>
            <person name="Ichihara T."/>
            <person name="Shiohata N."/>
            <person name="Sano S."/>
            <person name="Moriya S."/>
            <person name="Momiyama H."/>
            <person name="Satoh N."/>
            <person name="Takami S."/>
            <person name="Terashima Y."/>
            <person name="Suzuki O."/>
            <person name="Nakagawa S."/>
            <person name="Senoh A."/>
            <person name="Mizoguchi H."/>
            <person name="Goto Y."/>
            <person name="Shimizu F."/>
            <person name="Wakebe H."/>
            <person name="Hishigaki H."/>
            <person name="Watanabe T."/>
            <person name="Sugiyama A."/>
            <person name="Takemoto M."/>
            <person name="Kawakami B."/>
            <person name="Yamazaki M."/>
            <person name="Watanabe K."/>
            <person name="Kumagai A."/>
            <person name="Itakura S."/>
            <person name="Fukuzumi Y."/>
            <person name="Fujimori Y."/>
            <person name="Komiyama M."/>
            <person name="Tashiro H."/>
            <person name="Tanigami A."/>
            <person name="Fujiwara T."/>
            <person name="Ono T."/>
            <person name="Yamada K."/>
            <person name="Fujii Y."/>
            <person name="Ozaki K."/>
            <person name="Hirao M."/>
            <person name="Ohmori Y."/>
            <person name="Kawabata A."/>
            <person name="Hikiji T."/>
            <person name="Kobatake N."/>
            <person name="Inagaki H."/>
            <person name="Ikema Y."/>
            <person name="Okamoto S."/>
            <person name="Okitani R."/>
            <person name="Kawakami T."/>
            <person name="Noguchi S."/>
            <person name="Itoh T."/>
            <person name="Shigeta K."/>
            <person name="Senba T."/>
            <person name="Matsumura K."/>
            <person name="Nakajima Y."/>
            <person name="Mizuno T."/>
            <person name="Morinaga M."/>
            <person name="Sasaki M."/>
            <person name="Togashi T."/>
            <person name="Oyama M."/>
            <person name="Hata H."/>
            <person name="Watanabe M."/>
            <person name="Komatsu T."/>
            <person name="Mizushima-Sugano J."/>
            <person name="Satoh T."/>
            <person name="Shirai Y."/>
            <person name="Takahashi Y."/>
            <person name="Nakagawa K."/>
            <person name="Okumura K."/>
            <person name="Nagase T."/>
            <person name="Nomura N."/>
            <person name="Kikuchi H."/>
            <person name="Masuho Y."/>
            <person name="Yamashita R."/>
            <person name="Nakai K."/>
            <person name="Yada T."/>
            <person name="Nakamura Y."/>
            <person name="Ohara O."/>
            <person name="Isogai T."/>
            <person name="Sugano S."/>
        </authorList>
    </citation>
    <scope>NUCLEOTIDE SEQUENCE [LARGE SCALE MRNA] (ISOFORMS 1; 3; 4; 5 AND 6)</scope>
    <scope>VARIANT VAL-234</scope>
    <source>
        <tissue>Hippocampus</tissue>
        <tissue>Testis</tissue>
        <tissue>Trachea</tissue>
        <tissue>Uterus</tissue>
    </source>
</reference>
<reference key="3">
    <citation type="journal article" date="2005" name="Nature">
        <title>Generation and annotation of the DNA sequences of human chromosomes 2 and 4.</title>
        <authorList>
            <person name="Hillier L.W."/>
            <person name="Graves T.A."/>
            <person name="Fulton R.S."/>
            <person name="Fulton L.A."/>
            <person name="Pepin K.H."/>
            <person name="Minx P."/>
            <person name="Wagner-McPherson C."/>
            <person name="Layman D."/>
            <person name="Wylie K."/>
            <person name="Sekhon M."/>
            <person name="Becker M.C."/>
            <person name="Fewell G.A."/>
            <person name="Delehaunty K.D."/>
            <person name="Miner T.L."/>
            <person name="Nash W.E."/>
            <person name="Kremitzki C."/>
            <person name="Oddy L."/>
            <person name="Du H."/>
            <person name="Sun H."/>
            <person name="Bradshaw-Cordum H."/>
            <person name="Ali J."/>
            <person name="Carter J."/>
            <person name="Cordes M."/>
            <person name="Harris A."/>
            <person name="Isak A."/>
            <person name="van Brunt A."/>
            <person name="Nguyen C."/>
            <person name="Du F."/>
            <person name="Courtney L."/>
            <person name="Kalicki J."/>
            <person name="Ozersky P."/>
            <person name="Abbott S."/>
            <person name="Armstrong J."/>
            <person name="Belter E.A."/>
            <person name="Caruso L."/>
            <person name="Cedroni M."/>
            <person name="Cotton M."/>
            <person name="Davidson T."/>
            <person name="Desai A."/>
            <person name="Elliott G."/>
            <person name="Erb T."/>
            <person name="Fronick C."/>
            <person name="Gaige T."/>
            <person name="Haakenson W."/>
            <person name="Haglund K."/>
            <person name="Holmes A."/>
            <person name="Harkins R."/>
            <person name="Kim K."/>
            <person name="Kruchowski S.S."/>
            <person name="Strong C.M."/>
            <person name="Grewal N."/>
            <person name="Goyea E."/>
            <person name="Hou S."/>
            <person name="Levy A."/>
            <person name="Martinka S."/>
            <person name="Mead K."/>
            <person name="McLellan M.D."/>
            <person name="Meyer R."/>
            <person name="Randall-Maher J."/>
            <person name="Tomlinson C."/>
            <person name="Dauphin-Kohlberg S."/>
            <person name="Kozlowicz-Reilly A."/>
            <person name="Shah N."/>
            <person name="Swearengen-Shahid S."/>
            <person name="Snider J."/>
            <person name="Strong J.T."/>
            <person name="Thompson J."/>
            <person name="Yoakum M."/>
            <person name="Leonard S."/>
            <person name="Pearman C."/>
            <person name="Trani L."/>
            <person name="Radionenko M."/>
            <person name="Waligorski J.E."/>
            <person name="Wang C."/>
            <person name="Rock S.M."/>
            <person name="Tin-Wollam A.-M."/>
            <person name="Maupin R."/>
            <person name="Latreille P."/>
            <person name="Wendl M.C."/>
            <person name="Yang S.-P."/>
            <person name="Pohl C."/>
            <person name="Wallis J.W."/>
            <person name="Spieth J."/>
            <person name="Bieri T.A."/>
            <person name="Berkowicz N."/>
            <person name="Nelson J.O."/>
            <person name="Osborne J."/>
            <person name="Ding L."/>
            <person name="Meyer R."/>
            <person name="Sabo A."/>
            <person name="Shotland Y."/>
            <person name="Sinha P."/>
            <person name="Wohldmann P.E."/>
            <person name="Cook L.L."/>
            <person name="Hickenbotham M.T."/>
            <person name="Eldred J."/>
            <person name="Williams D."/>
            <person name="Jones T.A."/>
            <person name="She X."/>
            <person name="Ciccarelli F.D."/>
            <person name="Izaurralde E."/>
            <person name="Taylor J."/>
            <person name="Schmutz J."/>
            <person name="Myers R.M."/>
            <person name="Cox D.R."/>
            <person name="Huang X."/>
            <person name="McPherson J.D."/>
            <person name="Mardis E.R."/>
            <person name="Clifton S.W."/>
            <person name="Warren W.C."/>
            <person name="Chinwalla A.T."/>
            <person name="Eddy S.R."/>
            <person name="Marra M.A."/>
            <person name="Ovcharenko I."/>
            <person name="Furey T.S."/>
            <person name="Miller W."/>
            <person name="Eichler E.E."/>
            <person name="Bork P."/>
            <person name="Suyama M."/>
            <person name="Torrents D."/>
            <person name="Waterston R.H."/>
            <person name="Wilson R.K."/>
        </authorList>
    </citation>
    <scope>NUCLEOTIDE SEQUENCE [LARGE SCALE GENOMIC DNA]</scope>
</reference>
<reference key="4">
    <citation type="submission" date="2005-07" db="EMBL/GenBank/DDBJ databases">
        <authorList>
            <person name="Mural R.J."/>
            <person name="Istrail S."/>
            <person name="Sutton G.G."/>
            <person name="Florea L."/>
            <person name="Halpern A.L."/>
            <person name="Mobarry C.M."/>
            <person name="Lippert R."/>
            <person name="Walenz B."/>
            <person name="Shatkay H."/>
            <person name="Dew I."/>
            <person name="Miller J.R."/>
            <person name="Flanigan M.J."/>
            <person name="Edwards N.J."/>
            <person name="Bolanos R."/>
            <person name="Fasulo D."/>
            <person name="Halldorsson B.V."/>
            <person name="Hannenhalli S."/>
            <person name="Turner R."/>
            <person name="Yooseph S."/>
            <person name="Lu F."/>
            <person name="Nusskern D.R."/>
            <person name="Shue B.C."/>
            <person name="Zheng X.H."/>
            <person name="Zhong F."/>
            <person name="Delcher A.L."/>
            <person name="Huson D.H."/>
            <person name="Kravitz S.A."/>
            <person name="Mouchard L."/>
            <person name="Reinert K."/>
            <person name="Remington K.A."/>
            <person name="Clark A.G."/>
            <person name="Waterman M.S."/>
            <person name="Eichler E.E."/>
            <person name="Adams M.D."/>
            <person name="Hunkapiller M.W."/>
            <person name="Myers E.W."/>
            <person name="Venter J.C."/>
        </authorList>
    </citation>
    <scope>NUCLEOTIDE SEQUENCE [LARGE SCALE GENOMIC DNA]</scope>
    <scope>VARIANT VAL-234</scope>
</reference>
<reference key="5">
    <citation type="journal article" date="2005" name="Int. J. Mol. Med.">
        <title>Identification and characterization of a novel human nephronectin gene in silico.</title>
        <authorList>
            <person name="Huang J.T.-J."/>
            <person name="Lee V."/>
        </authorList>
    </citation>
    <scope>IDENTIFICATION</scope>
    <scope>TISSUE SPECIFICITY</scope>
    <scope>DEVELOPMENTAL STAGE</scope>
</reference>
<protein>
    <recommendedName>
        <fullName>Nephronectin</fullName>
    </recommendedName>
    <alternativeName>
        <fullName>Preosteoblast EGF-like repeat protein with MAM domain</fullName>
    </alternativeName>
    <alternativeName>
        <fullName>Protein EGFL6-like</fullName>
    </alternativeName>
</protein>
<keyword id="KW-0025">Alternative splicing</keyword>
<keyword id="KW-0106">Calcium</keyword>
<keyword id="KW-0130">Cell adhesion</keyword>
<keyword id="KW-0217">Developmental protein</keyword>
<keyword id="KW-0221">Differentiation</keyword>
<keyword id="KW-1015">Disulfide bond</keyword>
<keyword id="KW-0245">EGF-like domain</keyword>
<keyword id="KW-0272">Extracellular matrix</keyword>
<keyword id="KW-1267">Proteomics identification</keyword>
<keyword id="KW-1185">Reference proteome</keyword>
<keyword id="KW-0677">Repeat</keyword>
<keyword id="KW-0964">Secreted</keyword>
<keyword id="KW-0732">Signal</keyword>
<name>NPNT_HUMAN</name>
<accession>Q6UXI9</accession>
<accession>A6NFT9</accession>
<accession>A8K1W4</accession>
<accession>B4DIT4</accession>
<accession>B4DYK3</accession>
<accession>B4E2H7</accession>
<accession>B4E3H2</accession>
<accession>D6RCA1</accession>
<accession>E9PCK8</accession>
<accession>E9PCQ1</accession>
<accession>E9PE64</accession>
<accession>E9PF04</accession>
<comment type="function">
    <text evidence="1">Functional ligand of integrin alpha-8/beta-1 in kidney development. Regulates the expression of GDNF with integrin alpha-8/beta-1 which is essential for kidney development. May also play a role in the development and function of various tissues, regulating cell adhesion, spreading and survival through the binding of several integrins (By similarity).</text>
</comment>
<comment type="subunit">
    <text evidence="1">Homodimer and homotrimer.</text>
</comment>
<comment type="subcellular location">
    <subcellularLocation>
        <location evidence="1">Secreted</location>
        <location evidence="1">Extracellular space</location>
        <location evidence="1">Extracellular matrix</location>
    </subcellularLocation>
    <text evidence="1">Trapped on the cell surface or in the extracellular matrix.</text>
</comment>
<comment type="alternative products">
    <event type="alternative splicing"/>
    <isoform>
        <id>Q6UXI9-1</id>
        <name>1</name>
        <sequence type="displayed"/>
    </isoform>
    <isoform>
        <id>Q6UXI9-2</id>
        <name>2</name>
        <sequence type="described" ref="VSP_026987 VSP_026988"/>
    </isoform>
    <isoform>
        <id>Q6UXI9-3</id>
        <name>3</name>
        <sequence type="described" ref="VSP_045813"/>
    </isoform>
    <isoform>
        <id>Q6UXI9-4</id>
        <name>4</name>
        <sequence type="described" ref="VSP_045813 VSP_026987"/>
    </isoform>
    <isoform>
        <id>Q6UXI9-5</id>
        <name>5</name>
        <sequence type="described" ref="VSP_026987"/>
    </isoform>
    <isoform>
        <id>Q6UXI9-6</id>
        <name>6</name>
        <sequence type="described" ref="VSP_046131"/>
    </isoform>
</comment>
<comment type="tissue specificity">
    <text evidence="8">Expressed in kidney and lung and to a lower extent in brain, pregnant uterus, placenta, thyroid gland and blood vessels.</text>
</comment>
<comment type="developmental stage">
    <text evidence="8">Expressed in fetal kidney, cochlea, eye, heart and lung.</text>
</comment>
<comment type="domain">
    <text evidence="1">The MAM domain is required for localization at the cell surface.</text>
</comment>
<comment type="similarity">
    <text evidence="12">Belongs to the nephronectin family.</text>
</comment>
<proteinExistence type="evidence at protein level"/>
<dbReference type="EMBL" id="AY358336">
    <property type="protein sequence ID" value="AAQ88702.1"/>
    <property type="molecule type" value="mRNA"/>
</dbReference>
<dbReference type="EMBL" id="AK290029">
    <property type="protein sequence ID" value="BAF82718.1"/>
    <property type="molecule type" value="mRNA"/>
</dbReference>
<dbReference type="EMBL" id="AK295772">
    <property type="protein sequence ID" value="BAG58596.1"/>
    <property type="molecule type" value="mRNA"/>
</dbReference>
<dbReference type="EMBL" id="AK302477">
    <property type="protein sequence ID" value="BAG63765.1"/>
    <property type="molecule type" value="mRNA"/>
</dbReference>
<dbReference type="EMBL" id="AK304279">
    <property type="protein sequence ID" value="BAG65139.1"/>
    <property type="molecule type" value="mRNA"/>
</dbReference>
<dbReference type="EMBL" id="AK304721">
    <property type="protein sequence ID" value="BAG65484.1"/>
    <property type="molecule type" value="mRNA"/>
</dbReference>
<dbReference type="EMBL" id="AC093782">
    <property type="status" value="NOT_ANNOTATED_CDS"/>
    <property type="molecule type" value="Genomic_DNA"/>
</dbReference>
<dbReference type="EMBL" id="AC109361">
    <property type="status" value="NOT_ANNOTATED_CDS"/>
    <property type="molecule type" value="Genomic_DNA"/>
</dbReference>
<dbReference type="EMBL" id="CH471057">
    <property type="protein sequence ID" value="EAX06196.1"/>
    <property type="molecule type" value="Genomic_DNA"/>
</dbReference>
<dbReference type="CCDS" id="CCDS34046.1">
    <molecule id="Q6UXI9-1"/>
</dbReference>
<dbReference type="CCDS" id="CCDS54784.1">
    <molecule id="Q6UXI9-6"/>
</dbReference>
<dbReference type="CCDS" id="CCDS54785.1">
    <molecule id="Q6UXI9-3"/>
</dbReference>
<dbReference type="CCDS" id="CCDS54786.1">
    <molecule id="Q6UXI9-4"/>
</dbReference>
<dbReference type="CCDS" id="CCDS54787.1">
    <molecule id="Q6UXI9-5"/>
</dbReference>
<dbReference type="RefSeq" id="NP_001028219.1">
    <molecule id="Q6UXI9-1"/>
    <property type="nucleotide sequence ID" value="NM_001033047.3"/>
</dbReference>
<dbReference type="RefSeq" id="NP_001171619.1">
    <molecule id="Q6UXI9-6"/>
    <property type="nucleotide sequence ID" value="NM_001184690.2"/>
</dbReference>
<dbReference type="RefSeq" id="NP_001171620.1">
    <molecule id="Q6UXI9-3"/>
    <property type="nucleotide sequence ID" value="NM_001184691.2"/>
</dbReference>
<dbReference type="RefSeq" id="NP_001171621.1">
    <molecule id="Q6UXI9-5"/>
    <property type="nucleotide sequence ID" value="NM_001184692.2"/>
</dbReference>
<dbReference type="RefSeq" id="NP_001171622.1">
    <molecule id="Q6UXI9-4"/>
    <property type="nucleotide sequence ID" value="NM_001184693.2"/>
</dbReference>
<dbReference type="SMR" id="Q6UXI9"/>
<dbReference type="BioGRID" id="129117">
    <property type="interactions" value="10"/>
</dbReference>
<dbReference type="FunCoup" id="Q6UXI9">
    <property type="interactions" value="173"/>
</dbReference>
<dbReference type="IntAct" id="Q6UXI9">
    <property type="interactions" value="3"/>
</dbReference>
<dbReference type="STRING" id="9606.ENSP00000389252"/>
<dbReference type="GlyConnect" id="1540">
    <property type="glycosylation" value="13 N-Linked glycans (1 site)"/>
</dbReference>
<dbReference type="GlyCosmos" id="Q6UXI9">
    <property type="glycosylation" value="4 sites, 15 glycans"/>
</dbReference>
<dbReference type="GlyGen" id="Q6UXI9">
    <property type="glycosylation" value="8 sites, 24 N-linked glycans (1 site), 4 O-linked glycans (6 sites)"/>
</dbReference>
<dbReference type="iPTMnet" id="Q6UXI9"/>
<dbReference type="PhosphoSitePlus" id="Q6UXI9"/>
<dbReference type="BioMuta" id="NPNT"/>
<dbReference type="DMDM" id="311033424"/>
<dbReference type="jPOST" id="Q6UXI9"/>
<dbReference type="MassIVE" id="Q6UXI9"/>
<dbReference type="PaxDb" id="9606-ENSP00000389252"/>
<dbReference type="PeptideAtlas" id="Q6UXI9"/>
<dbReference type="ProteomicsDB" id="19464"/>
<dbReference type="ProteomicsDB" id="19490"/>
<dbReference type="ProteomicsDB" id="19819"/>
<dbReference type="ProteomicsDB" id="19996"/>
<dbReference type="ProteomicsDB" id="67631">
    <molecule id="Q6UXI9-1"/>
</dbReference>
<dbReference type="ProteomicsDB" id="67632">
    <molecule id="Q6UXI9-2"/>
</dbReference>
<dbReference type="Pumba" id="Q6UXI9"/>
<dbReference type="Antibodypedia" id="1021">
    <property type="antibodies" value="125 antibodies from 22 providers"/>
</dbReference>
<dbReference type="DNASU" id="255743"/>
<dbReference type="Ensembl" id="ENST00000305572.12">
    <molecule id="Q6UXI9-2"/>
    <property type="protein sequence ID" value="ENSP00000302557.8"/>
    <property type="gene ID" value="ENSG00000168743.13"/>
</dbReference>
<dbReference type="Ensembl" id="ENST00000379987.7">
    <molecule id="Q6UXI9-1"/>
    <property type="protein sequence ID" value="ENSP00000369323.2"/>
    <property type="gene ID" value="ENSG00000168743.13"/>
</dbReference>
<dbReference type="Ensembl" id="ENST00000427316.6">
    <molecule id="Q6UXI9-3"/>
    <property type="protein sequence ID" value="ENSP00000389252.2"/>
    <property type="gene ID" value="ENSG00000168743.13"/>
</dbReference>
<dbReference type="Ensembl" id="ENST00000453617.6">
    <molecule id="Q6UXI9-6"/>
    <property type="protein sequence ID" value="ENSP00000402884.2"/>
    <property type="gene ID" value="ENSG00000168743.13"/>
</dbReference>
<dbReference type="Ensembl" id="ENST00000506666.5">
    <molecule id="Q6UXI9-4"/>
    <property type="protein sequence ID" value="ENSP00000422474.1"/>
    <property type="gene ID" value="ENSG00000168743.13"/>
</dbReference>
<dbReference type="Ensembl" id="ENST00000514622.5">
    <molecule id="Q6UXI9-5"/>
    <property type="protein sequence ID" value="ENSP00000422044.1"/>
    <property type="gene ID" value="ENSG00000168743.13"/>
</dbReference>
<dbReference type="GeneID" id="255743"/>
<dbReference type="KEGG" id="hsa:255743"/>
<dbReference type="MANE-Select" id="ENST00000379987.7">
    <property type="protein sequence ID" value="ENSP00000369323.2"/>
    <property type="RefSeq nucleotide sequence ID" value="NM_001033047.3"/>
    <property type="RefSeq protein sequence ID" value="NP_001028219.1"/>
</dbReference>
<dbReference type="UCSC" id="uc003hya.4">
    <molecule id="Q6UXI9-1"/>
    <property type="organism name" value="human"/>
</dbReference>
<dbReference type="AGR" id="HGNC:27405"/>
<dbReference type="CTD" id="255743"/>
<dbReference type="DisGeNET" id="255743"/>
<dbReference type="GeneCards" id="NPNT"/>
<dbReference type="HGNC" id="HGNC:27405">
    <property type="gene designation" value="NPNT"/>
</dbReference>
<dbReference type="HPA" id="ENSG00000168743">
    <property type="expression patterns" value="Tissue enhanced (lung, thyroid gland)"/>
</dbReference>
<dbReference type="MalaCards" id="NPNT"/>
<dbReference type="MIM" id="610306">
    <property type="type" value="gene"/>
</dbReference>
<dbReference type="neXtProt" id="NX_Q6UXI9"/>
<dbReference type="OpenTargets" id="ENSG00000168743"/>
<dbReference type="VEuPathDB" id="HostDB:ENSG00000168743"/>
<dbReference type="eggNOG" id="KOG1217">
    <property type="taxonomic scope" value="Eukaryota"/>
</dbReference>
<dbReference type="GeneTree" id="ENSGT00930000150973"/>
<dbReference type="HOGENOM" id="CLU_036867_0_0_1"/>
<dbReference type="InParanoid" id="Q6UXI9"/>
<dbReference type="OMA" id="PETCENE"/>
<dbReference type="OrthoDB" id="10060424at2759"/>
<dbReference type="PAN-GO" id="Q6UXI9">
    <property type="GO annotations" value="0 GO annotations based on evolutionary models"/>
</dbReference>
<dbReference type="PhylomeDB" id="Q6UXI9"/>
<dbReference type="TreeFam" id="TF330819"/>
<dbReference type="PathwayCommons" id="Q6UXI9"/>
<dbReference type="Reactome" id="R-HSA-9830364">
    <property type="pathway name" value="Formation of the nephric duct"/>
</dbReference>
<dbReference type="Reactome" id="R-HSA-9830674">
    <property type="pathway name" value="Formation of the ureteric bud"/>
</dbReference>
<dbReference type="SignaLink" id="Q6UXI9"/>
<dbReference type="SIGNOR" id="Q6UXI9"/>
<dbReference type="BioGRID-ORCS" id="255743">
    <property type="hits" value="11 hits in 1144 CRISPR screens"/>
</dbReference>
<dbReference type="ChiTaRS" id="NPNT">
    <property type="organism name" value="human"/>
</dbReference>
<dbReference type="GenomeRNAi" id="255743"/>
<dbReference type="Pharos" id="Q6UXI9">
    <property type="development level" value="Tbio"/>
</dbReference>
<dbReference type="PRO" id="PR:Q6UXI9"/>
<dbReference type="Proteomes" id="UP000005640">
    <property type="component" value="Chromosome 4"/>
</dbReference>
<dbReference type="RNAct" id="Q6UXI9">
    <property type="molecule type" value="protein"/>
</dbReference>
<dbReference type="Bgee" id="ENSG00000168743">
    <property type="expression patterns" value="Expressed in right lobe of thyroid gland and 166 other cell types or tissues"/>
</dbReference>
<dbReference type="ExpressionAtlas" id="Q6UXI9">
    <property type="expression patterns" value="baseline and differential"/>
</dbReference>
<dbReference type="GO" id="GO:0005604">
    <property type="term" value="C:basement membrane"/>
    <property type="evidence" value="ECO:0007669"/>
    <property type="project" value="Ensembl"/>
</dbReference>
<dbReference type="GO" id="GO:0062023">
    <property type="term" value="C:collagen-containing extracellular matrix"/>
    <property type="evidence" value="ECO:0007005"/>
    <property type="project" value="BHF-UCL"/>
</dbReference>
<dbReference type="GO" id="GO:0070062">
    <property type="term" value="C:extracellular exosome"/>
    <property type="evidence" value="ECO:0007005"/>
    <property type="project" value="UniProtKB"/>
</dbReference>
<dbReference type="GO" id="GO:0005576">
    <property type="term" value="C:extracellular region"/>
    <property type="evidence" value="ECO:0000250"/>
    <property type="project" value="BHF-UCL"/>
</dbReference>
<dbReference type="GO" id="GO:0016020">
    <property type="term" value="C:membrane"/>
    <property type="evidence" value="ECO:0007669"/>
    <property type="project" value="InterPro"/>
</dbReference>
<dbReference type="GO" id="GO:0030485">
    <property type="term" value="C:smooth muscle contractile fiber"/>
    <property type="evidence" value="ECO:0007669"/>
    <property type="project" value="Ensembl"/>
</dbReference>
<dbReference type="GO" id="GO:0005509">
    <property type="term" value="F:calcium ion binding"/>
    <property type="evidence" value="ECO:0007669"/>
    <property type="project" value="InterPro"/>
</dbReference>
<dbReference type="GO" id="GO:0005178">
    <property type="term" value="F:integrin binding"/>
    <property type="evidence" value="ECO:0000250"/>
    <property type="project" value="BHF-UCL"/>
</dbReference>
<dbReference type="GO" id="GO:0001658">
    <property type="term" value="P:branching involved in ureteric bud morphogenesis"/>
    <property type="evidence" value="ECO:0000250"/>
    <property type="project" value="BHF-UCL"/>
</dbReference>
<dbReference type="GO" id="GO:0033631">
    <property type="term" value="P:cell-cell adhesion mediated by integrin"/>
    <property type="evidence" value="ECO:0000250"/>
    <property type="project" value="BHF-UCL"/>
</dbReference>
<dbReference type="GO" id="GO:0007160">
    <property type="term" value="P:cell-matrix adhesion"/>
    <property type="evidence" value="ECO:0000250"/>
    <property type="project" value="BHF-UCL"/>
</dbReference>
<dbReference type="GO" id="GO:0071356">
    <property type="term" value="P:cellular response to tumor necrosis factor"/>
    <property type="evidence" value="ECO:0000250"/>
    <property type="project" value="BHF-UCL"/>
</dbReference>
<dbReference type="GO" id="GO:0045184">
    <property type="term" value="P:establishment of protein localization"/>
    <property type="evidence" value="ECO:0007669"/>
    <property type="project" value="Ensembl"/>
</dbReference>
<dbReference type="GO" id="GO:0030198">
    <property type="term" value="P:extracellular matrix organization"/>
    <property type="evidence" value="ECO:0000250"/>
    <property type="project" value="BHF-UCL"/>
</dbReference>
<dbReference type="GO" id="GO:0097195">
    <property type="term" value="P:pilomotor reflex"/>
    <property type="evidence" value="ECO:0007669"/>
    <property type="project" value="Ensembl"/>
</dbReference>
<dbReference type="GO" id="GO:0010811">
    <property type="term" value="P:positive regulation of cell-substrate adhesion"/>
    <property type="evidence" value="ECO:0000250"/>
    <property type="project" value="BHF-UCL"/>
</dbReference>
<dbReference type="GO" id="GO:0070374">
    <property type="term" value="P:positive regulation of ERK1 and ERK2 cascade"/>
    <property type="evidence" value="ECO:0000250"/>
    <property type="project" value="BHF-UCL"/>
</dbReference>
<dbReference type="GO" id="GO:0045669">
    <property type="term" value="P:positive regulation of osteoblast differentiation"/>
    <property type="evidence" value="ECO:0000250"/>
    <property type="project" value="BHF-UCL"/>
</dbReference>
<dbReference type="GO" id="GO:0045987">
    <property type="term" value="P:positive regulation of smooth muscle contraction"/>
    <property type="evidence" value="ECO:0007669"/>
    <property type="project" value="Ensembl"/>
</dbReference>
<dbReference type="GO" id="GO:0045944">
    <property type="term" value="P:positive regulation of transcription by RNA polymerase II"/>
    <property type="evidence" value="ECO:0007669"/>
    <property type="project" value="Ensembl"/>
</dbReference>
<dbReference type="GO" id="GO:0030511">
    <property type="term" value="P:positive regulation of transforming growth factor beta receptor signaling pathway"/>
    <property type="evidence" value="ECO:0007669"/>
    <property type="project" value="Ensembl"/>
</dbReference>
<dbReference type="GO" id="GO:0051145">
    <property type="term" value="P:smooth muscle cell differentiation"/>
    <property type="evidence" value="ECO:0007669"/>
    <property type="project" value="Ensembl"/>
</dbReference>
<dbReference type="GO" id="GO:0007179">
    <property type="term" value="P:transforming growth factor beta receptor signaling pathway"/>
    <property type="evidence" value="ECO:0007669"/>
    <property type="project" value="Ensembl"/>
</dbReference>
<dbReference type="GO" id="GO:0001657">
    <property type="term" value="P:ureteric bud development"/>
    <property type="evidence" value="ECO:0000250"/>
    <property type="project" value="BHF-UCL"/>
</dbReference>
<dbReference type="CDD" id="cd00054">
    <property type="entry name" value="EGF_CA"/>
    <property type="match status" value="1"/>
</dbReference>
<dbReference type="CDD" id="cd06263">
    <property type="entry name" value="MAM"/>
    <property type="match status" value="1"/>
</dbReference>
<dbReference type="FunFam" id="2.10.25.10:FF:000038">
    <property type="entry name" value="Fibrillin 2"/>
    <property type="match status" value="1"/>
</dbReference>
<dbReference type="FunFam" id="2.10.25.10:FF:000187">
    <property type="entry name" value="nephronectin isoform X1"/>
    <property type="match status" value="1"/>
</dbReference>
<dbReference type="FunFam" id="2.10.25.10:FF:000476">
    <property type="entry name" value="nephronectin isoform X1"/>
    <property type="match status" value="1"/>
</dbReference>
<dbReference type="FunFam" id="2.60.120.200:FF:000133">
    <property type="entry name" value="nephronectin isoform X1"/>
    <property type="match status" value="1"/>
</dbReference>
<dbReference type="FunFam" id="2.10.25.10:FF:000184">
    <property type="entry name" value="nephronectin isoform X2"/>
    <property type="match status" value="1"/>
</dbReference>
<dbReference type="FunFam" id="2.10.25.10:FF:000268">
    <property type="entry name" value="nephronectin isoform X2"/>
    <property type="match status" value="1"/>
</dbReference>
<dbReference type="Gene3D" id="2.60.120.200">
    <property type="match status" value="1"/>
</dbReference>
<dbReference type="Gene3D" id="2.10.25.10">
    <property type="entry name" value="Laminin"/>
    <property type="match status" value="5"/>
</dbReference>
<dbReference type="InterPro" id="IPR013320">
    <property type="entry name" value="ConA-like_dom_sf"/>
</dbReference>
<dbReference type="InterPro" id="IPR001881">
    <property type="entry name" value="EGF-like_Ca-bd_dom"/>
</dbReference>
<dbReference type="InterPro" id="IPR000742">
    <property type="entry name" value="EGF-like_dom"/>
</dbReference>
<dbReference type="InterPro" id="IPR000152">
    <property type="entry name" value="EGF-type_Asp/Asn_hydroxyl_site"/>
</dbReference>
<dbReference type="InterPro" id="IPR018097">
    <property type="entry name" value="EGF_Ca-bd_CS"/>
</dbReference>
<dbReference type="InterPro" id="IPR024731">
    <property type="entry name" value="EGF_dom"/>
</dbReference>
<dbReference type="InterPro" id="IPR009030">
    <property type="entry name" value="Growth_fac_rcpt_cys_sf"/>
</dbReference>
<dbReference type="InterPro" id="IPR000998">
    <property type="entry name" value="MAM_dom"/>
</dbReference>
<dbReference type="InterPro" id="IPR052235">
    <property type="entry name" value="Nephronectin_domain"/>
</dbReference>
<dbReference type="InterPro" id="IPR049883">
    <property type="entry name" value="NOTCH1_EGF-like"/>
</dbReference>
<dbReference type="PANTHER" id="PTHR24050:SF19">
    <property type="entry name" value="NEPHRONECTIN"/>
    <property type="match status" value="1"/>
</dbReference>
<dbReference type="PANTHER" id="PTHR24050">
    <property type="entry name" value="PA14 DOMAIN-CONTAINING PROTEIN"/>
    <property type="match status" value="1"/>
</dbReference>
<dbReference type="Pfam" id="PF12947">
    <property type="entry name" value="EGF_3"/>
    <property type="match status" value="1"/>
</dbReference>
<dbReference type="Pfam" id="PF07645">
    <property type="entry name" value="EGF_CA"/>
    <property type="match status" value="2"/>
</dbReference>
<dbReference type="Pfam" id="PF00629">
    <property type="entry name" value="MAM"/>
    <property type="match status" value="1"/>
</dbReference>
<dbReference type="SMART" id="SM00181">
    <property type="entry name" value="EGF"/>
    <property type="match status" value="5"/>
</dbReference>
<dbReference type="SMART" id="SM00179">
    <property type="entry name" value="EGF_CA"/>
    <property type="match status" value="3"/>
</dbReference>
<dbReference type="SMART" id="SM00137">
    <property type="entry name" value="MAM"/>
    <property type="match status" value="1"/>
</dbReference>
<dbReference type="SUPFAM" id="SSF49899">
    <property type="entry name" value="Concanavalin A-like lectins/glucanases"/>
    <property type="match status" value="1"/>
</dbReference>
<dbReference type="SUPFAM" id="SSF57184">
    <property type="entry name" value="Growth factor receptor domain"/>
    <property type="match status" value="2"/>
</dbReference>
<dbReference type="PROSITE" id="PS00010">
    <property type="entry name" value="ASX_HYDROXYL"/>
    <property type="match status" value="3"/>
</dbReference>
<dbReference type="PROSITE" id="PS00022">
    <property type="entry name" value="EGF_1"/>
    <property type="match status" value="1"/>
</dbReference>
<dbReference type="PROSITE" id="PS01186">
    <property type="entry name" value="EGF_2"/>
    <property type="match status" value="3"/>
</dbReference>
<dbReference type="PROSITE" id="PS50026">
    <property type="entry name" value="EGF_3"/>
    <property type="match status" value="4"/>
</dbReference>
<dbReference type="PROSITE" id="PS01187">
    <property type="entry name" value="EGF_CA"/>
    <property type="match status" value="3"/>
</dbReference>
<dbReference type="PROSITE" id="PS50060">
    <property type="entry name" value="MAM_2"/>
    <property type="match status" value="1"/>
</dbReference>
<gene>
    <name type="primary">NPNT</name>
    <name type="synonym">EGFL6L</name>
    <name type="synonym">POEM</name>
    <name type="ORF">UNQ295/PRO334</name>
</gene>
<sequence length="565" mass="61907">MDFLLALVLVSSLYLQAAAEFDGRWPRQIVSSIGLCRYGGRIDCCWGWARQSWGQCQPVCQPRCKHGECIGPNKCKCHPGYAGKTCNQDLNECGLKPRPCKHRCMNTYGSYKCYCLNGYMLMPDGSCSSALTCSMANCQYGCDVVKGQIRCQCPSPGLQLAPDGRTCVDVDECATGRASCPRFRQCVNTFGSYICKCHKGFDLMYIGGKYQCHDIDECSLGQYQCSSFARCYNIRGSYKCKCKEGYQGDGLTCVYIPKVMIEPSGPIHVPKGNGTILKGDTGNNNWIPDVGSTWWPPKTPYIPPIITNRPTSKPTTRPTPKPTPIPTPPPPPPLPTELRTPLPPTTPERPTTGLTTIAPAASTPPGGITVDNRVQTDPQKPRGDVFIPRQPSNDLFEIFEIERGVSADDEAKDDPGVLVHSCNFDHGLCGWIREKDNDLHWEPIRDPAGGQYLTVSAAKAPGGKAARLVLPLGRLMHSGDLCLSFRHKVTGLHSGTLQVFVRKHGAHGAALWGRNGGHGWRQTQITLRGADIKSVVFKGEKRRGHTGEIGLDDVSLKKGHCSEER</sequence>
<feature type="signal peptide" evidence="2">
    <location>
        <begin position="1"/>
        <end position="19"/>
    </location>
</feature>
<feature type="chain" id="PRO_0000295684" description="Nephronectin">
    <location>
        <begin position="20"/>
        <end position="565"/>
    </location>
</feature>
<feature type="domain" description="EGF-like 1" evidence="3">
    <location>
        <begin position="52"/>
        <end position="87"/>
    </location>
</feature>
<feature type="domain" description="EGF-like 2; calcium-binding" evidence="3">
    <location>
        <begin position="89"/>
        <end position="128"/>
    </location>
</feature>
<feature type="domain" description="EGF-like 3" evidence="3">
    <location>
        <begin position="132"/>
        <end position="168"/>
    </location>
</feature>
<feature type="domain" description="EGF-like 4; calcium-binding" evidence="3">
    <location>
        <begin position="169"/>
        <end position="213"/>
    </location>
</feature>
<feature type="domain" description="EGF-like 5; calcium-binding" evidence="3">
    <location>
        <begin position="214"/>
        <end position="254"/>
    </location>
</feature>
<feature type="domain" description="MAM" evidence="4">
    <location>
        <begin position="420"/>
        <end position="563"/>
    </location>
</feature>
<feature type="region of interest" description="Disordered" evidence="5">
    <location>
        <begin position="301"/>
        <end position="389"/>
    </location>
</feature>
<feature type="short sequence motif" description="Integrin interaction">
    <location>
        <begin position="382"/>
        <end position="384"/>
    </location>
</feature>
<feature type="compositionally biased region" description="Low complexity" evidence="5">
    <location>
        <begin position="304"/>
        <end position="316"/>
    </location>
</feature>
<feature type="compositionally biased region" description="Pro residues" evidence="5">
    <location>
        <begin position="317"/>
        <end position="347"/>
    </location>
</feature>
<feature type="disulfide bond" evidence="3">
    <location>
        <begin position="56"/>
        <end position="69"/>
    </location>
</feature>
<feature type="disulfide bond" evidence="3">
    <location>
        <begin position="60"/>
        <end position="75"/>
    </location>
</feature>
<feature type="disulfide bond" evidence="3">
    <location>
        <begin position="77"/>
        <end position="86"/>
    </location>
</feature>
<feature type="disulfide bond" evidence="3">
    <location>
        <begin position="93"/>
        <end position="104"/>
    </location>
</feature>
<feature type="disulfide bond" evidence="3">
    <location>
        <begin position="100"/>
        <end position="113"/>
    </location>
</feature>
<feature type="disulfide bond" evidence="3">
    <location>
        <begin position="115"/>
        <end position="127"/>
    </location>
</feature>
<feature type="disulfide bond" evidence="3">
    <location>
        <begin position="173"/>
        <end position="186"/>
    </location>
</feature>
<feature type="disulfide bond" evidence="3">
    <location>
        <begin position="180"/>
        <end position="195"/>
    </location>
</feature>
<feature type="disulfide bond" evidence="3">
    <location>
        <begin position="197"/>
        <end position="212"/>
    </location>
</feature>
<feature type="disulfide bond" evidence="3">
    <location>
        <begin position="218"/>
        <end position="231"/>
    </location>
</feature>
<feature type="disulfide bond" evidence="3">
    <location>
        <begin position="225"/>
        <end position="240"/>
    </location>
</feature>
<feature type="disulfide bond" evidence="3">
    <location>
        <begin position="242"/>
        <end position="253"/>
    </location>
</feature>
<feature type="splice variant" id="VSP_046131" description="In isoform 6." evidence="11">
    <original>P</original>
    <variation>PFYVLRQRIARIRCQLKA</variation>
    <location>
        <position position="58"/>
    </location>
</feature>
<feature type="splice variant" id="VSP_045813" description="In isoform 3 and isoform 4." evidence="11">
    <original>Q</original>
    <variation>QDEHIPAPLDQGSEQPLFQPLDHQATSLPSR</variation>
    <location>
        <position position="88"/>
    </location>
</feature>
<feature type="splice variant" id="VSP_026987" description="In isoform 2, isoform 4 and isoform 5." evidence="10 11">
    <original>IPRQPSNDLFEIFEIERGVSADDEAKDDPG</original>
    <variation>S</variation>
    <location>
        <begin position="387"/>
        <end position="416"/>
    </location>
</feature>
<feature type="splice variant" id="VSP_026988" description="In isoform 2." evidence="10">
    <original>VVFKGEKRRGHTGEIGLDDVSLKKGHCSEE</original>
    <variation>ESQ</variation>
    <location>
        <begin position="535"/>
        <end position="564"/>
    </location>
</feature>
<feature type="sequence variant" id="VAR_033314" description="In dbSNP:rs35132891." evidence="6">
    <original>Q</original>
    <variation>H</variation>
    <location>
        <position position="159"/>
    </location>
</feature>
<feature type="sequence variant" id="VAR_033315" description="In dbSNP:rs4340795." evidence="6 7 9">
    <original>I</original>
    <variation>V</variation>
    <location>
        <position position="234"/>
    </location>
</feature>
<feature type="sequence variant" id="VAR_033316" description="In dbSNP:rs35613262.">
    <original>G</original>
    <variation>S</variation>
    <location>
        <position position="473"/>
    </location>
</feature>
<feature type="sequence variant" id="VAR_033317" description="In dbSNP:rs35488797.">
    <original>M</original>
    <variation>T</variation>
    <location>
        <position position="476"/>
    </location>
</feature>
<feature type="sequence conflict" description="In Ref. 2; BAG63765." evidence="12" ref="2">
    <original>E</original>
    <variation>K</variation>
    <location>
        <position position="20"/>
    </location>
</feature>
<feature type="sequence conflict" description="In Ref. 2; BAG65139." evidence="12" ref="2">
    <original>T</original>
    <variation>A</variation>
    <location>
        <position position="340"/>
    </location>
</feature>
<organism>
    <name type="scientific">Homo sapiens</name>
    <name type="common">Human</name>
    <dbReference type="NCBI Taxonomy" id="9606"/>
    <lineage>
        <taxon>Eukaryota</taxon>
        <taxon>Metazoa</taxon>
        <taxon>Chordata</taxon>
        <taxon>Craniata</taxon>
        <taxon>Vertebrata</taxon>
        <taxon>Euteleostomi</taxon>
        <taxon>Mammalia</taxon>
        <taxon>Eutheria</taxon>
        <taxon>Euarchontoglires</taxon>
        <taxon>Primates</taxon>
        <taxon>Haplorrhini</taxon>
        <taxon>Catarrhini</taxon>
        <taxon>Hominidae</taxon>
        <taxon>Homo</taxon>
    </lineage>
</organism>